<accession>Q71WX8</accession>
<proteinExistence type="inferred from homology"/>
<name>SSRP_LISMF</name>
<comment type="function">
    <text evidence="1">Required for rescue of stalled ribosomes mediated by trans-translation. Binds to transfer-messenger RNA (tmRNA), required for stable association of tmRNA with ribosomes. tmRNA and SmpB together mimic tRNA shape, replacing the anticodon stem-loop with SmpB. tmRNA is encoded by the ssrA gene; the 2 termini fold to resemble tRNA(Ala) and it encodes a 'tag peptide', a short internal open reading frame. During trans-translation Ala-aminoacylated tmRNA acts like a tRNA, entering the A-site of stalled ribosomes, displacing the stalled mRNA. The ribosome then switches to translate the ORF on the tmRNA; the nascent peptide is terminated with the 'tag peptide' encoded by the tmRNA and targeted for degradation. The ribosome is freed to recommence translation, which seems to be the essential function of trans-translation.</text>
</comment>
<comment type="subcellular location">
    <subcellularLocation>
        <location evidence="1">Cytoplasm</location>
    </subcellularLocation>
    <text evidence="1">The tmRNA-SmpB complex associates with stalled 70S ribosomes.</text>
</comment>
<comment type="similarity">
    <text evidence="1">Belongs to the SmpB family.</text>
</comment>
<feature type="chain" id="PRO_0000102974" description="SsrA-binding protein">
    <location>
        <begin position="1"/>
        <end position="154"/>
    </location>
</feature>
<feature type="region of interest" description="Disordered" evidence="2">
    <location>
        <begin position="131"/>
        <end position="154"/>
    </location>
</feature>
<feature type="compositionally biased region" description="Basic and acidic residues" evidence="2">
    <location>
        <begin position="132"/>
        <end position="154"/>
    </location>
</feature>
<sequence length="154" mass="17924">MPKGDGKLVAQNKKARHDYAIEETFEAGIVLQGTEIKSVRNARVNLKDSYARIDKGEIFLHNMHISPYEQGNRYNHDPLRTRKLLLHKKQISRLIGETKESGYSIVPLKMYIKDGYAKVLIGVARGKKKYDKRQDLKQKEAKRDIERAFKERQQ</sequence>
<reference key="1">
    <citation type="journal article" date="2004" name="Nucleic Acids Res.">
        <title>Whole genome comparisons of serotype 4b and 1/2a strains of the food-borne pathogen Listeria monocytogenes reveal new insights into the core genome components of this species.</title>
        <authorList>
            <person name="Nelson K.E."/>
            <person name="Fouts D.E."/>
            <person name="Mongodin E.F."/>
            <person name="Ravel J."/>
            <person name="DeBoy R.T."/>
            <person name="Kolonay J.F."/>
            <person name="Rasko D.A."/>
            <person name="Angiuoli S.V."/>
            <person name="Gill S.R."/>
            <person name="Paulsen I.T."/>
            <person name="Peterson J.D."/>
            <person name="White O."/>
            <person name="Nelson W.C."/>
            <person name="Nierman W.C."/>
            <person name="Beanan M.J."/>
            <person name="Brinkac L.M."/>
            <person name="Daugherty S.C."/>
            <person name="Dodson R.J."/>
            <person name="Durkin A.S."/>
            <person name="Madupu R."/>
            <person name="Haft D.H."/>
            <person name="Selengut J."/>
            <person name="Van Aken S.E."/>
            <person name="Khouri H.M."/>
            <person name="Fedorova N."/>
            <person name="Forberger H.A."/>
            <person name="Tran B."/>
            <person name="Kathariou S."/>
            <person name="Wonderling L.D."/>
            <person name="Uhlich G.A."/>
            <person name="Bayles D.O."/>
            <person name="Luchansky J.B."/>
            <person name="Fraser C.M."/>
        </authorList>
    </citation>
    <scope>NUCLEOTIDE SEQUENCE [LARGE SCALE GENOMIC DNA]</scope>
    <source>
        <strain>F2365</strain>
    </source>
</reference>
<dbReference type="EMBL" id="AE017262">
    <property type="protein sequence ID" value="AAT05187.1"/>
    <property type="molecule type" value="Genomic_DNA"/>
</dbReference>
<dbReference type="RefSeq" id="WP_003723350.1">
    <property type="nucleotide sequence ID" value="NC_002973.6"/>
</dbReference>
<dbReference type="SMR" id="Q71WX8"/>
<dbReference type="GeneID" id="93240313"/>
<dbReference type="KEGG" id="lmf:LMOf2365_2421"/>
<dbReference type="HOGENOM" id="CLU_108953_0_0_9"/>
<dbReference type="GO" id="GO:0005829">
    <property type="term" value="C:cytosol"/>
    <property type="evidence" value="ECO:0007669"/>
    <property type="project" value="TreeGrafter"/>
</dbReference>
<dbReference type="GO" id="GO:0003723">
    <property type="term" value="F:RNA binding"/>
    <property type="evidence" value="ECO:0007669"/>
    <property type="project" value="UniProtKB-UniRule"/>
</dbReference>
<dbReference type="GO" id="GO:0070929">
    <property type="term" value="P:trans-translation"/>
    <property type="evidence" value="ECO:0007669"/>
    <property type="project" value="UniProtKB-UniRule"/>
</dbReference>
<dbReference type="CDD" id="cd09294">
    <property type="entry name" value="SmpB"/>
    <property type="match status" value="1"/>
</dbReference>
<dbReference type="Gene3D" id="2.40.280.10">
    <property type="match status" value="1"/>
</dbReference>
<dbReference type="HAMAP" id="MF_00023">
    <property type="entry name" value="SmpB"/>
    <property type="match status" value="1"/>
</dbReference>
<dbReference type="InterPro" id="IPR023620">
    <property type="entry name" value="SmpB"/>
</dbReference>
<dbReference type="InterPro" id="IPR000037">
    <property type="entry name" value="SsrA-bd_prot"/>
</dbReference>
<dbReference type="InterPro" id="IPR020081">
    <property type="entry name" value="SsrA-bd_prot_CS"/>
</dbReference>
<dbReference type="NCBIfam" id="NF003843">
    <property type="entry name" value="PRK05422.1"/>
    <property type="match status" value="1"/>
</dbReference>
<dbReference type="NCBIfam" id="TIGR00086">
    <property type="entry name" value="smpB"/>
    <property type="match status" value="1"/>
</dbReference>
<dbReference type="PANTHER" id="PTHR30308:SF2">
    <property type="entry name" value="SSRA-BINDING PROTEIN"/>
    <property type="match status" value="1"/>
</dbReference>
<dbReference type="PANTHER" id="PTHR30308">
    <property type="entry name" value="TMRNA-BINDING COMPONENT OF TRANS-TRANSLATION TAGGING COMPLEX"/>
    <property type="match status" value="1"/>
</dbReference>
<dbReference type="Pfam" id="PF01668">
    <property type="entry name" value="SmpB"/>
    <property type="match status" value="1"/>
</dbReference>
<dbReference type="SUPFAM" id="SSF74982">
    <property type="entry name" value="Small protein B (SmpB)"/>
    <property type="match status" value="1"/>
</dbReference>
<dbReference type="PROSITE" id="PS01317">
    <property type="entry name" value="SSRP"/>
    <property type="match status" value="1"/>
</dbReference>
<gene>
    <name evidence="1" type="primary">smpB</name>
    <name type="ordered locus">LMOf2365_2421</name>
</gene>
<keyword id="KW-0963">Cytoplasm</keyword>
<keyword id="KW-0694">RNA-binding</keyword>
<protein>
    <recommendedName>
        <fullName evidence="1">SsrA-binding protein</fullName>
    </recommendedName>
    <alternativeName>
        <fullName evidence="1">Small protein B</fullName>
    </alternativeName>
</protein>
<evidence type="ECO:0000255" key="1">
    <source>
        <dbReference type="HAMAP-Rule" id="MF_00023"/>
    </source>
</evidence>
<evidence type="ECO:0000256" key="2">
    <source>
        <dbReference type="SAM" id="MobiDB-lite"/>
    </source>
</evidence>
<organism>
    <name type="scientific">Listeria monocytogenes serotype 4b (strain F2365)</name>
    <dbReference type="NCBI Taxonomy" id="265669"/>
    <lineage>
        <taxon>Bacteria</taxon>
        <taxon>Bacillati</taxon>
        <taxon>Bacillota</taxon>
        <taxon>Bacilli</taxon>
        <taxon>Bacillales</taxon>
        <taxon>Listeriaceae</taxon>
        <taxon>Listeria</taxon>
    </lineage>
</organism>